<proteinExistence type="inferred from homology"/>
<feature type="chain" id="PRO_1000068176" description="Large ribosomal subunit protein uL23">
    <location>
        <begin position="1"/>
        <end position="99"/>
    </location>
</feature>
<dbReference type="EMBL" id="CP000407">
    <property type="protein sequence ID" value="ABP89045.1"/>
    <property type="molecule type" value="Genomic_DNA"/>
</dbReference>
<dbReference type="SMR" id="A4VSF6"/>
<dbReference type="STRING" id="391295.SSU05_0073"/>
<dbReference type="KEGG" id="ssu:SSU05_0073"/>
<dbReference type="eggNOG" id="COG0089">
    <property type="taxonomic scope" value="Bacteria"/>
</dbReference>
<dbReference type="HOGENOM" id="CLU_037562_3_2_9"/>
<dbReference type="GO" id="GO:1990904">
    <property type="term" value="C:ribonucleoprotein complex"/>
    <property type="evidence" value="ECO:0007669"/>
    <property type="project" value="UniProtKB-KW"/>
</dbReference>
<dbReference type="GO" id="GO:0005840">
    <property type="term" value="C:ribosome"/>
    <property type="evidence" value="ECO:0007669"/>
    <property type="project" value="UniProtKB-KW"/>
</dbReference>
<dbReference type="GO" id="GO:0019843">
    <property type="term" value="F:rRNA binding"/>
    <property type="evidence" value="ECO:0007669"/>
    <property type="project" value="UniProtKB-UniRule"/>
</dbReference>
<dbReference type="GO" id="GO:0003735">
    <property type="term" value="F:structural constituent of ribosome"/>
    <property type="evidence" value="ECO:0007669"/>
    <property type="project" value="InterPro"/>
</dbReference>
<dbReference type="GO" id="GO:0006412">
    <property type="term" value="P:translation"/>
    <property type="evidence" value="ECO:0007669"/>
    <property type="project" value="UniProtKB-UniRule"/>
</dbReference>
<dbReference type="FunFam" id="3.30.70.330:FF:000001">
    <property type="entry name" value="50S ribosomal protein L23"/>
    <property type="match status" value="1"/>
</dbReference>
<dbReference type="Gene3D" id="3.30.70.330">
    <property type="match status" value="1"/>
</dbReference>
<dbReference type="HAMAP" id="MF_01369_B">
    <property type="entry name" value="Ribosomal_uL23_B"/>
    <property type="match status" value="1"/>
</dbReference>
<dbReference type="InterPro" id="IPR012677">
    <property type="entry name" value="Nucleotide-bd_a/b_plait_sf"/>
</dbReference>
<dbReference type="InterPro" id="IPR013025">
    <property type="entry name" value="Ribosomal_uL23-like"/>
</dbReference>
<dbReference type="InterPro" id="IPR012678">
    <property type="entry name" value="Ribosomal_uL23/eL15/eS24_sf"/>
</dbReference>
<dbReference type="InterPro" id="IPR001014">
    <property type="entry name" value="Ribosomal_uL23_CS"/>
</dbReference>
<dbReference type="NCBIfam" id="NF004361">
    <property type="entry name" value="PRK05738.2-1"/>
    <property type="match status" value="1"/>
</dbReference>
<dbReference type="NCBIfam" id="NF004363">
    <property type="entry name" value="PRK05738.2-4"/>
    <property type="match status" value="1"/>
</dbReference>
<dbReference type="PANTHER" id="PTHR11620">
    <property type="entry name" value="60S RIBOSOMAL PROTEIN L23A"/>
    <property type="match status" value="1"/>
</dbReference>
<dbReference type="Pfam" id="PF00276">
    <property type="entry name" value="Ribosomal_L23"/>
    <property type="match status" value="1"/>
</dbReference>
<dbReference type="SUPFAM" id="SSF54189">
    <property type="entry name" value="Ribosomal proteins S24e, L23 and L15e"/>
    <property type="match status" value="1"/>
</dbReference>
<dbReference type="PROSITE" id="PS00050">
    <property type="entry name" value="RIBOSOMAL_L23"/>
    <property type="match status" value="1"/>
</dbReference>
<organism>
    <name type="scientific">Streptococcus suis (strain 05ZYH33)</name>
    <dbReference type="NCBI Taxonomy" id="391295"/>
    <lineage>
        <taxon>Bacteria</taxon>
        <taxon>Bacillati</taxon>
        <taxon>Bacillota</taxon>
        <taxon>Bacilli</taxon>
        <taxon>Lactobacillales</taxon>
        <taxon>Streptococcaceae</taxon>
        <taxon>Streptococcus</taxon>
    </lineage>
</organism>
<keyword id="KW-0687">Ribonucleoprotein</keyword>
<keyword id="KW-0689">Ribosomal protein</keyword>
<keyword id="KW-0694">RNA-binding</keyword>
<keyword id="KW-0699">rRNA-binding</keyword>
<gene>
    <name evidence="1" type="primary">rplW</name>
    <name type="ordered locus">SSU05_0073</name>
</gene>
<name>RL23_STRSY</name>
<reference key="1">
    <citation type="journal article" date="2007" name="PLoS ONE">
        <title>A glimpse of streptococcal toxic shock syndrome from comparative genomics of S. suis 2 Chinese isolates.</title>
        <authorList>
            <person name="Chen C."/>
            <person name="Tang J."/>
            <person name="Dong W."/>
            <person name="Wang C."/>
            <person name="Feng Y."/>
            <person name="Wang J."/>
            <person name="Zheng F."/>
            <person name="Pan X."/>
            <person name="Liu D."/>
            <person name="Li M."/>
            <person name="Song Y."/>
            <person name="Zhu X."/>
            <person name="Sun H."/>
            <person name="Feng T."/>
            <person name="Guo Z."/>
            <person name="Ju A."/>
            <person name="Ge J."/>
            <person name="Dong Y."/>
            <person name="Sun W."/>
            <person name="Jiang Y."/>
            <person name="Wang J."/>
            <person name="Yan J."/>
            <person name="Yang H."/>
            <person name="Wang X."/>
            <person name="Gao G.F."/>
            <person name="Yang R."/>
            <person name="Wang J."/>
            <person name="Yu J."/>
        </authorList>
    </citation>
    <scope>NUCLEOTIDE SEQUENCE [LARGE SCALE GENOMIC DNA]</scope>
    <source>
        <strain>05ZYH33</strain>
    </source>
</reference>
<comment type="function">
    <text evidence="1">One of the early assembly proteins it binds 23S rRNA. One of the proteins that surrounds the polypeptide exit tunnel on the outside of the ribosome. Forms the main docking site for trigger factor binding to the ribosome.</text>
</comment>
<comment type="subunit">
    <text evidence="1">Part of the 50S ribosomal subunit. Contacts protein L29, and trigger factor when it is bound to the ribosome.</text>
</comment>
<comment type="similarity">
    <text evidence="1">Belongs to the universal ribosomal protein uL23 family.</text>
</comment>
<protein>
    <recommendedName>
        <fullName evidence="1">Large ribosomal subunit protein uL23</fullName>
    </recommendedName>
    <alternativeName>
        <fullName evidence="2">50S ribosomal protein L23</fullName>
    </alternativeName>
</protein>
<accession>A4VSF6</accession>
<evidence type="ECO:0000255" key="1">
    <source>
        <dbReference type="HAMAP-Rule" id="MF_01369"/>
    </source>
</evidence>
<evidence type="ECO:0000305" key="2"/>
<sequence length="99" mass="10864">MNLYDVIKKPVITESSMGQLEAGKYVFEVDTRAHKLLIKQAVEAAFEGVKVANVNTINVKPKTKRVGRYVGRTNKVKKAIITLAADSKAIELFATADAE</sequence>